<keyword id="KW-0002">3D-structure</keyword>
<keyword id="KW-0025">Alternative splicing</keyword>
<keyword id="KW-0051">Antiviral defense</keyword>
<keyword id="KW-0963">Cytoplasm</keyword>
<keyword id="KW-0269">Exonuclease</keyword>
<keyword id="KW-0378">Hydrolase</keyword>
<keyword id="KW-0391">Immunity</keyword>
<keyword id="KW-0399">Innate immunity</keyword>
<keyword id="KW-0464">Manganese</keyword>
<keyword id="KW-0479">Metal-binding</keyword>
<keyword id="KW-0540">Nuclease</keyword>
<keyword id="KW-0539">Nucleus</keyword>
<keyword id="KW-1267">Proteomics identification</keyword>
<keyword id="KW-1185">Reference proteome</keyword>
<keyword id="KW-0694">RNA-binding</keyword>
<keyword id="KW-0698">rRNA processing</keyword>
<accession>Q96AZ6</accession>
<accession>O00441</accession>
<accession>O00586</accession>
<proteinExistence type="evidence at protein level"/>
<dbReference type="EC" id="3.1.13.1"/>
<dbReference type="EMBL" id="X89773">
    <property type="protein sequence ID" value="CAA61915.2"/>
    <property type="molecule type" value="mRNA"/>
</dbReference>
<dbReference type="EMBL" id="U88964">
    <property type="protein sequence ID" value="AAB53416.1"/>
    <property type="molecule type" value="mRNA"/>
</dbReference>
<dbReference type="EMBL" id="BT006952">
    <property type="protein sequence ID" value="AAP35598.1"/>
    <property type="molecule type" value="mRNA"/>
</dbReference>
<dbReference type="EMBL" id="CR456942">
    <property type="protein sequence ID" value="CAG33223.1"/>
    <property type="molecule type" value="mRNA"/>
</dbReference>
<dbReference type="EMBL" id="BC007922">
    <property type="protein sequence ID" value="AAH07922.1"/>
    <property type="molecule type" value="mRNA"/>
</dbReference>
<dbReference type="EMBL" id="BC016341">
    <property type="protein sequence ID" value="AAH16341.1"/>
    <property type="molecule type" value="mRNA"/>
</dbReference>
<dbReference type="CCDS" id="CCDS10345.1">
    <molecule id="Q96AZ6-1"/>
</dbReference>
<dbReference type="RefSeq" id="NP_001290162.1">
    <molecule id="Q96AZ6-1"/>
    <property type="nucleotide sequence ID" value="NM_001303233.2"/>
</dbReference>
<dbReference type="RefSeq" id="NP_001290163.1">
    <molecule id="Q96AZ6-1"/>
    <property type="nucleotide sequence ID" value="NM_001303234.2"/>
</dbReference>
<dbReference type="RefSeq" id="NP_001290165.1">
    <property type="nucleotide sequence ID" value="NM_001303236.1"/>
</dbReference>
<dbReference type="RefSeq" id="NP_002192.2">
    <molecule id="Q96AZ6-1"/>
    <property type="nucleotide sequence ID" value="NM_002201.5"/>
</dbReference>
<dbReference type="RefSeq" id="XP_005254956.1">
    <property type="nucleotide sequence ID" value="XM_005254899.2"/>
</dbReference>
<dbReference type="RefSeq" id="XP_006720551.1">
    <property type="nucleotide sequence ID" value="XM_006720488.3"/>
</dbReference>
<dbReference type="PDB" id="1WLJ">
    <property type="method" value="X-ray"/>
    <property type="resolution" value="1.90 A"/>
    <property type="chains" value="A=1-181"/>
</dbReference>
<dbReference type="PDB" id="7UGB">
    <property type="method" value="X-ray"/>
    <property type="resolution" value="1.90 A"/>
    <property type="chains" value="I=168-181"/>
</dbReference>
<dbReference type="PDBsum" id="1WLJ"/>
<dbReference type="PDBsum" id="7UGB"/>
<dbReference type="SMR" id="Q96AZ6"/>
<dbReference type="BioGRID" id="109876">
    <property type="interactions" value="15"/>
</dbReference>
<dbReference type="FunCoup" id="Q96AZ6">
    <property type="interactions" value="831"/>
</dbReference>
<dbReference type="IntAct" id="Q96AZ6">
    <property type="interactions" value="11"/>
</dbReference>
<dbReference type="STRING" id="9606.ENSP00000306565"/>
<dbReference type="DrugBank" id="DB03685">
    <property type="generic name" value="Uridine monophosphate"/>
</dbReference>
<dbReference type="iPTMnet" id="Q96AZ6"/>
<dbReference type="PhosphoSitePlus" id="Q96AZ6"/>
<dbReference type="BioMuta" id="ISG20"/>
<dbReference type="DMDM" id="57012967"/>
<dbReference type="jPOST" id="Q96AZ6"/>
<dbReference type="MassIVE" id="Q96AZ6"/>
<dbReference type="PaxDb" id="9606-ENSP00000306565"/>
<dbReference type="PeptideAtlas" id="Q96AZ6"/>
<dbReference type="ProteomicsDB" id="76025">
    <molecule id="Q96AZ6-1"/>
</dbReference>
<dbReference type="ProteomicsDB" id="76026">
    <molecule id="Q96AZ6-2"/>
</dbReference>
<dbReference type="Pumba" id="Q96AZ6"/>
<dbReference type="Antibodypedia" id="15665">
    <property type="antibodies" value="359 antibodies from 27 providers"/>
</dbReference>
<dbReference type="DNASU" id="3669"/>
<dbReference type="Ensembl" id="ENST00000306072.10">
    <molecule id="Q96AZ6-1"/>
    <property type="protein sequence ID" value="ENSP00000306565.5"/>
    <property type="gene ID" value="ENSG00000172183.16"/>
</dbReference>
<dbReference type="Ensembl" id="ENST00000379224.10">
    <molecule id="Q96AZ6-1"/>
    <property type="protein sequence ID" value="ENSP00000368526.6"/>
    <property type="gene ID" value="ENSG00000172183.16"/>
</dbReference>
<dbReference type="Ensembl" id="ENST00000560741.5">
    <molecule id="Q96AZ6-1"/>
    <property type="protein sequence ID" value="ENSP00000453638.1"/>
    <property type="gene ID" value="ENSG00000172183.16"/>
</dbReference>
<dbReference type="GeneID" id="3669"/>
<dbReference type="KEGG" id="hsa:3669"/>
<dbReference type="MANE-Select" id="ENST00000306072.10">
    <property type="protein sequence ID" value="ENSP00000306565.5"/>
    <property type="RefSeq nucleotide sequence ID" value="NM_002201.6"/>
    <property type="RefSeq protein sequence ID" value="NP_002192.2"/>
</dbReference>
<dbReference type="UCSC" id="uc002bmv.2">
    <molecule id="Q96AZ6-1"/>
    <property type="organism name" value="human"/>
</dbReference>
<dbReference type="AGR" id="HGNC:6130"/>
<dbReference type="CTD" id="3669"/>
<dbReference type="DisGeNET" id="3669"/>
<dbReference type="GeneCards" id="ISG20"/>
<dbReference type="HGNC" id="HGNC:6130">
    <property type="gene designation" value="ISG20"/>
</dbReference>
<dbReference type="HPA" id="ENSG00000172183">
    <property type="expression patterns" value="Tissue enhanced (lymphoid)"/>
</dbReference>
<dbReference type="MIM" id="604533">
    <property type="type" value="gene"/>
</dbReference>
<dbReference type="neXtProt" id="NX_Q96AZ6"/>
<dbReference type="OpenTargets" id="ENSG00000172183"/>
<dbReference type="PharmGKB" id="PA29930"/>
<dbReference type="VEuPathDB" id="HostDB:ENSG00000172183"/>
<dbReference type="eggNOG" id="KOG2249">
    <property type="taxonomic scope" value="Eukaryota"/>
</dbReference>
<dbReference type="GeneTree" id="ENSGT00940000160781"/>
<dbReference type="HOGENOM" id="CLU_022453_3_1_1"/>
<dbReference type="InParanoid" id="Q96AZ6"/>
<dbReference type="OMA" id="NWPCALP"/>
<dbReference type="OrthoDB" id="16516at2759"/>
<dbReference type="PAN-GO" id="Q96AZ6">
    <property type="GO annotations" value="6 GO annotations based on evolutionary models"/>
</dbReference>
<dbReference type="PhylomeDB" id="Q96AZ6"/>
<dbReference type="TreeFam" id="TF354340"/>
<dbReference type="PathwayCommons" id="Q96AZ6"/>
<dbReference type="Reactome" id="R-HSA-909733">
    <property type="pathway name" value="Interferon alpha/beta signaling"/>
</dbReference>
<dbReference type="SignaLink" id="Q96AZ6"/>
<dbReference type="BioGRID-ORCS" id="3669">
    <property type="hits" value="13 hits in 1168 CRISPR screens"/>
</dbReference>
<dbReference type="ChiTaRS" id="ISG20">
    <property type="organism name" value="human"/>
</dbReference>
<dbReference type="EvolutionaryTrace" id="Q96AZ6"/>
<dbReference type="GeneWiki" id="ISG20"/>
<dbReference type="GenomeRNAi" id="3669"/>
<dbReference type="Pharos" id="Q96AZ6">
    <property type="development level" value="Tbio"/>
</dbReference>
<dbReference type="PRO" id="PR:Q96AZ6"/>
<dbReference type="Proteomes" id="UP000005640">
    <property type="component" value="Chromosome 15"/>
</dbReference>
<dbReference type="RNAct" id="Q96AZ6">
    <property type="molecule type" value="protein"/>
</dbReference>
<dbReference type="Bgee" id="ENSG00000172183">
    <property type="expression patterns" value="Expressed in spleen and 157 other cell types or tissues"/>
</dbReference>
<dbReference type="ExpressionAtlas" id="Q96AZ6">
    <property type="expression patterns" value="baseline and differential"/>
</dbReference>
<dbReference type="GO" id="GO:0015030">
    <property type="term" value="C:Cajal body"/>
    <property type="evidence" value="ECO:0000314"/>
    <property type="project" value="UniProtKB"/>
</dbReference>
<dbReference type="GO" id="GO:0005737">
    <property type="term" value="C:cytoplasm"/>
    <property type="evidence" value="ECO:0000314"/>
    <property type="project" value="UniProtKB"/>
</dbReference>
<dbReference type="GO" id="GO:0005730">
    <property type="term" value="C:nucleolus"/>
    <property type="evidence" value="ECO:0000314"/>
    <property type="project" value="UniProtKB"/>
</dbReference>
<dbReference type="GO" id="GO:0005654">
    <property type="term" value="C:nucleoplasm"/>
    <property type="evidence" value="ECO:0000304"/>
    <property type="project" value="Reactome"/>
</dbReference>
<dbReference type="GO" id="GO:0005634">
    <property type="term" value="C:nucleus"/>
    <property type="evidence" value="ECO:0000314"/>
    <property type="project" value="UniProtKB"/>
</dbReference>
<dbReference type="GO" id="GO:0000932">
    <property type="term" value="C:P-body"/>
    <property type="evidence" value="ECO:0007669"/>
    <property type="project" value="UniProtKB-SubCell"/>
</dbReference>
<dbReference type="GO" id="GO:0016605">
    <property type="term" value="C:PML body"/>
    <property type="evidence" value="ECO:0000314"/>
    <property type="project" value="UniProtKB"/>
</dbReference>
<dbReference type="GO" id="GO:0000175">
    <property type="term" value="F:3'-5'-RNA exonuclease activity"/>
    <property type="evidence" value="ECO:0000314"/>
    <property type="project" value="UniProtKB"/>
</dbReference>
<dbReference type="GO" id="GO:0004527">
    <property type="term" value="F:exonuclease activity"/>
    <property type="evidence" value="ECO:0000315"/>
    <property type="project" value="UniProtKB"/>
</dbReference>
<dbReference type="GO" id="GO:0008859">
    <property type="term" value="F:exoribonuclease II activity"/>
    <property type="evidence" value="ECO:0007669"/>
    <property type="project" value="UniProtKB-EC"/>
</dbReference>
<dbReference type="GO" id="GO:0046872">
    <property type="term" value="F:metal ion binding"/>
    <property type="evidence" value="ECO:0007669"/>
    <property type="project" value="UniProtKB-KW"/>
</dbReference>
<dbReference type="GO" id="GO:0008310">
    <property type="term" value="F:single-stranded DNA 3'-5' DNA exonuclease activity"/>
    <property type="evidence" value="ECO:0000314"/>
    <property type="project" value="UniProtKB"/>
</dbReference>
<dbReference type="GO" id="GO:0030619">
    <property type="term" value="F:U1 snRNA binding"/>
    <property type="evidence" value="ECO:0000314"/>
    <property type="project" value="UniProtKB"/>
</dbReference>
<dbReference type="GO" id="GO:0030620">
    <property type="term" value="F:U2 snRNA binding"/>
    <property type="evidence" value="ECO:0000314"/>
    <property type="project" value="UniProtKB"/>
</dbReference>
<dbReference type="GO" id="GO:0034511">
    <property type="term" value="F:U3 snoRNA binding"/>
    <property type="evidence" value="ECO:0000314"/>
    <property type="project" value="UniProtKB"/>
</dbReference>
<dbReference type="GO" id="GO:0051607">
    <property type="term" value="P:defense response to virus"/>
    <property type="evidence" value="ECO:0000315"/>
    <property type="project" value="UniProtKB"/>
</dbReference>
<dbReference type="GO" id="GO:0006308">
    <property type="term" value="P:DNA catabolic process"/>
    <property type="evidence" value="ECO:0000314"/>
    <property type="project" value="UniProtKB"/>
</dbReference>
<dbReference type="GO" id="GO:0045087">
    <property type="term" value="P:innate immune response"/>
    <property type="evidence" value="ECO:0007669"/>
    <property type="project" value="UniProtKB-KW"/>
</dbReference>
<dbReference type="GO" id="GO:0045071">
    <property type="term" value="P:negative regulation of viral genome replication"/>
    <property type="evidence" value="ECO:0000315"/>
    <property type="project" value="UniProtKB"/>
</dbReference>
<dbReference type="GO" id="GO:0009615">
    <property type="term" value="P:response to virus"/>
    <property type="evidence" value="ECO:0000314"/>
    <property type="project" value="UniProtKB"/>
</dbReference>
<dbReference type="GO" id="GO:0006401">
    <property type="term" value="P:RNA catabolic process"/>
    <property type="evidence" value="ECO:0000314"/>
    <property type="project" value="UniProtKB"/>
</dbReference>
<dbReference type="GO" id="GO:0006396">
    <property type="term" value="P:RNA processing"/>
    <property type="evidence" value="ECO:0000318"/>
    <property type="project" value="GO_Central"/>
</dbReference>
<dbReference type="GO" id="GO:0006364">
    <property type="term" value="P:rRNA processing"/>
    <property type="evidence" value="ECO:0007669"/>
    <property type="project" value="UniProtKB-KW"/>
</dbReference>
<dbReference type="FunFam" id="3.30.420.10:FF:000007">
    <property type="entry name" value="Interferon-stimulated exonuclease gene 20"/>
    <property type="match status" value="1"/>
</dbReference>
<dbReference type="Gene3D" id="3.30.420.10">
    <property type="entry name" value="Ribonuclease H-like superfamily/Ribonuclease H"/>
    <property type="match status" value="1"/>
</dbReference>
<dbReference type="InterPro" id="IPR013520">
    <property type="entry name" value="Exonuclease_RNaseT/DNA_pol3"/>
</dbReference>
<dbReference type="InterPro" id="IPR047021">
    <property type="entry name" value="REXO1/3/4-like"/>
</dbReference>
<dbReference type="InterPro" id="IPR012337">
    <property type="entry name" value="RNaseH-like_sf"/>
</dbReference>
<dbReference type="InterPro" id="IPR036397">
    <property type="entry name" value="RNaseH_sf"/>
</dbReference>
<dbReference type="PANTHER" id="PTHR12801:SF59">
    <property type="entry name" value="INTERFERON-STIMULATED GENE 20 KDA PROTEIN"/>
    <property type="match status" value="1"/>
</dbReference>
<dbReference type="PANTHER" id="PTHR12801">
    <property type="entry name" value="RNA EXONUCLEASE REXO1 / RECO3 FAMILY MEMBER-RELATED"/>
    <property type="match status" value="1"/>
</dbReference>
<dbReference type="Pfam" id="PF00929">
    <property type="entry name" value="RNase_T"/>
    <property type="match status" value="1"/>
</dbReference>
<dbReference type="SMART" id="SM00479">
    <property type="entry name" value="EXOIII"/>
    <property type="match status" value="1"/>
</dbReference>
<dbReference type="SUPFAM" id="SSF53098">
    <property type="entry name" value="Ribonuclease H-like"/>
    <property type="match status" value="1"/>
</dbReference>
<name>ISG20_HUMAN</name>
<comment type="function">
    <text evidence="1 2 3 5 6 7 8">Interferon-induced antiviral exoribonuclease that acts mainly on single-stranded RNA (PubMed:11401564, PubMed:12594219, PubMed:16033969). Exhibits antiviral activity against RNA viruses including hepatitis C virus (HCV), hepatitis A virus (HAV) and yellow fever virus (YFV) (PubMed:16514659, PubMed:21036379). Inhibition of several viruses such as chikungunya virus (CHIKV) does not involve the degradation of viral RNAs, but rather the inhibition of translation of viral proteins (By similarity). Exerts a translational control over a large panel of non-self RNA substrates while sparing endogenous transcripts. This activity correlates with the protein's ability to localize in cytoplasmic processing bodies (PubMed:31600344). May also act as master regulator of over hundred interferon stimulated genes leading to viral genome translation inhibition (By similarity). May play additional roles in the maturation of snRNAs and rRNAs, and in ribosome biogenesis (PubMed:16514659).</text>
</comment>
<comment type="catalytic activity">
    <reaction>
        <text>Exonucleolytic cleavage in the 3'- to 5'-direction to yield nucleoside 5'-phosphates.</text>
        <dbReference type="EC" id="3.1.13.1"/>
    </reaction>
</comment>
<comment type="cofactor">
    <cofactor evidence="4">
        <name>Mn(2+)</name>
        <dbReference type="ChEBI" id="CHEBI:29035"/>
    </cofactor>
    <text evidence="4">Binds 2 manganese ions per subunit.</text>
</comment>
<comment type="biophysicochemical properties">
    <phDependence>
        <text>Optimum pH is 7.0.</text>
    </phDependence>
</comment>
<comment type="subunit">
    <text evidence="4 9">Associates with PML and SP100 in the PML NB complex. Associates with survival motor neuron protein (SMN)-containing macromolecular nuclear complexes and U1 and U2 snRNAs and U3 snoRNA.</text>
</comment>
<comment type="subcellular location">
    <subcellularLocation>
        <location evidence="6">Nucleus</location>
    </subcellularLocation>
    <subcellularLocation>
        <location evidence="6">Nucleus</location>
        <location evidence="6">Nucleolus</location>
    </subcellularLocation>
    <subcellularLocation>
        <location evidence="8">Cytoplasm</location>
    </subcellularLocation>
    <subcellularLocation>
        <location evidence="6">Nucleus</location>
        <location evidence="6">Cajal body</location>
    </subcellularLocation>
    <subcellularLocation>
        <location evidence="8">Cytoplasm</location>
        <location evidence="8">P-body</location>
    </subcellularLocation>
</comment>
<comment type="alternative products">
    <event type="alternative splicing"/>
    <isoform>
        <id>Q96AZ6-1</id>
        <name>1</name>
        <sequence type="displayed"/>
    </isoform>
    <isoform>
        <id>Q96AZ6-2</id>
        <name>2</name>
        <sequence type="described" ref="VSP_012429 VSP_012430"/>
    </isoform>
</comment>
<comment type="tissue specificity">
    <text evidence="9 10">Highly expressed in peripheral blood leukocytes, spleen, thymus, colon and lung. Up regulated by E2 in estrogen receptor-positive breast cancer lines.</text>
</comment>
<comment type="induction">
    <text evidence="9">Induced by interferons alpha and beta. Weaker induction was seen with interferon gamma. Increased expression was seen at the transcriptional level.</text>
</comment>
<comment type="similarity">
    <text evidence="12">Belongs to the exonuclease superfamily.</text>
</comment>
<sequence>MAGSREVVAMDCEMVGLGPHRESGLARCSLVNVHGAVLYDKFIRPEGEITDYRTRVSGVTPQHMVGATPFAVARLEILQLLKGKLVVGHDLKHDFQALKEDMSGYTIYDTSTDRLLWREAKLDHCRRVSLRVLSERLLHKSIQNSLLGHSSVEDARATMELYQISQRIRARRGLPRLAVSD</sequence>
<gene>
    <name type="primary">ISG20</name>
    <name type="synonym">HEM45</name>
</gene>
<protein>
    <recommendedName>
        <fullName>Interferon-stimulated gene 20 kDa protein</fullName>
        <ecNumber>3.1.13.1</ecNumber>
    </recommendedName>
    <alternativeName>
        <fullName>Estrogen-regulated transcript 45 protein</fullName>
    </alternativeName>
    <alternativeName>
        <fullName>Promyelocytic leukemia nuclear body-associated protein ISG20</fullName>
    </alternativeName>
</protein>
<reference key="1">
    <citation type="journal article" date="1997" name="J. Biol. Chem.">
        <title>Molecular cloning of a new interferon-induced PML nuclear bodies-associated protein.</title>
        <authorList>
            <person name="Gongora C."/>
            <person name="David G."/>
            <person name="Pintard L."/>
            <person name="Tissot C."/>
            <person name="Hua T.D."/>
            <person name="Dejean A."/>
            <person name="Mechti N."/>
        </authorList>
    </citation>
    <scope>NUCLEOTIDE SEQUENCE [MRNA] (ISOFORM 1)</scope>
    <scope>SUBCELLULAR LOCATION</scope>
    <scope>TISSUE SPECIFICITY</scope>
    <scope>IDENTIFICATION IN PML NB COMPLEX</scope>
    <scope>INDUCTION</scope>
</reference>
<reference key="2">
    <citation type="journal article" date="1998" name="J. Steroid Biochem. Mol. Biol.">
        <title>Expression and estrogen regulation of the HEM45 mRNA in human tumor lines and in the rat uterus.</title>
        <authorList>
            <person name="Pentecost B.T."/>
        </authorList>
    </citation>
    <scope>NUCLEOTIDE SEQUENCE [MRNA] (ISOFORM 1)</scope>
    <scope>TISSUE SPECIFICITY</scope>
</reference>
<reference key="3">
    <citation type="submission" date="2003-05" db="EMBL/GenBank/DDBJ databases">
        <title>Cloning of human full-length CDSs in BD Creator(TM) system donor vector.</title>
        <authorList>
            <person name="Kalnine N."/>
            <person name="Chen X."/>
            <person name="Rolfs A."/>
            <person name="Halleck A."/>
            <person name="Hines L."/>
            <person name="Eisenstein S."/>
            <person name="Koundinya M."/>
            <person name="Raphael J."/>
            <person name="Moreira D."/>
            <person name="Kelley T."/>
            <person name="LaBaer J."/>
            <person name="Lin Y."/>
            <person name="Phelan M."/>
            <person name="Farmer A."/>
        </authorList>
    </citation>
    <scope>NUCLEOTIDE SEQUENCE [LARGE SCALE MRNA] (ISOFORM 1)</scope>
</reference>
<reference key="4">
    <citation type="submission" date="2004-06" db="EMBL/GenBank/DDBJ databases">
        <title>Cloning of human full open reading frames in Gateway(TM) system entry vector (pDONR201).</title>
        <authorList>
            <person name="Ebert L."/>
            <person name="Schick M."/>
            <person name="Neubert P."/>
            <person name="Schatten R."/>
            <person name="Henze S."/>
            <person name="Korn B."/>
        </authorList>
    </citation>
    <scope>NUCLEOTIDE SEQUENCE [LARGE SCALE MRNA] (ISOFORM 1)</scope>
</reference>
<reference key="5">
    <citation type="journal article" date="2004" name="Genome Res.">
        <title>The status, quality, and expansion of the NIH full-length cDNA project: the Mammalian Gene Collection (MGC).</title>
        <authorList>
            <consortium name="The MGC Project Team"/>
        </authorList>
    </citation>
    <scope>NUCLEOTIDE SEQUENCE [LARGE SCALE MRNA] (ISOFORMS 1 AND 2)</scope>
    <source>
        <tissue>B-cell</tissue>
        <tissue>Brain</tissue>
    </source>
</reference>
<reference key="6">
    <citation type="journal article" date="2001" name="Biochemistry">
        <title>The human interferon- and estrogen-regulated ISG20/HEM45 gene product degrades single-stranded RNA and DNA in vitro.</title>
        <authorList>
            <person name="Nguyen L.H."/>
            <person name="Espert L."/>
            <person name="Mechti N."/>
            <person name="Wilson D.M. III"/>
        </authorList>
    </citation>
    <scope>FUNCTION</scope>
    <scope>ACTIVITY REGULATION</scope>
</reference>
<reference key="7">
    <citation type="journal article" date="2003" name="J. Biol. Chem.">
        <title>ISG20, a new interferon-induced RNase specific for single-stranded RNA, defines an alternative antiviral pathway against RNA genomic viruses.</title>
        <authorList>
            <person name="Espert L."/>
            <person name="Degols G."/>
            <person name="Gongora C."/>
            <person name="Blondel D."/>
            <person name="Williams B.R."/>
            <person name="Silverman R.H."/>
            <person name="Mechti N."/>
        </authorList>
    </citation>
    <scope>FUNCTION</scope>
</reference>
<reference key="8">
    <citation type="journal article" date="2005" name="J. Gen. Virol.">
        <title>Interferon-induced exonuclease ISG20 exhibits an antiviral activity against human immunodeficiency virus type 1.</title>
        <authorList>
            <person name="Espert L."/>
            <person name="Degols G."/>
            <person name="Lin Y.L."/>
            <person name="Vincent T."/>
            <person name="Benkirane M."/>
            <person name="Mechti N."/>
        </authorList>
    </citation>
    <scope>FUNCTION</scope>
</reference>
<reference key="9">
    <citation type="journal article" date="2006" name="J. Cell. Biochem.">
        <title>The exonuclease ISG20 mainly localizes in the nucleolus and the Cajal (Coiled) bodies and is associated with nuclear SMN protein-containing complexes.</title>
        <authorList>
            <person name="Espert L."/>
            <person name="Eldin P."/>
            <person name="Gongora C."/>
            <person name="Bayard B."/>
            <person name="Harper F."/>
            <person name="Chelbi-Alix M.K."/>
            <person name="Bertrand E."/>
            <person name="Degols G."/>
            <person name="Mechti N."/>
        </authorList>
    </citation>
    <scope>FUNCTION</scope>
    <scope>SUBCELLULAR LOCATION</scope>
    <scope>INTERACTION WITH SMN COMPLEX AND SNRNAS</scope>
</reference>
<reference key="10">
    <citation type="journal article" date="2007" name="Biochimie">
        <title>ISG20, an actor of the innate immune response.</title>
        <authorList>
            <person name="Degols G."/>
            <person name="Eldin P."/>
            <person name="Mechti N."/>
        </authorList>
    </citation>
    <scope>REVIEW ON FUNCTION</scope>
</reference>
<reference key="11">
    <citation type="journal article" date="2011" name="BMC Syst. Biol.">
        <title>Initial characterization of the human central proteome.</title>
        <authorList>
            <person name="Burkard T.R."/>
            <person name="Planyavsky M."/>
            <person name="Kaupe I."/>
            <person name="Breitwieser F.P."/>
            <person name="Buerckstuemmer T."/>
            <person name="Bennett K.L."/>
            <person name="Superti-Furga G."/>
            <person name="Colinge J."/>
        </authorList>
    </citation>
    <scope>IDENTIFICATION BY MASS SPECTROMETRY [LARGE SCALE ANALYSIS]</scope>
</reference>
<reference key="12">
    <citation type="journal article" date="2011" name="Virology">
        <title>Antiviral activities of ISG20 in positive-strand RNA virus infections.</title>
        <authorList>
            <person name="Zhou Z."/>
            <person name="Wang N."/>
            <person name="Woodson S.E."/>
            <person name="Dong Q."/>
            <person name="Wang J."/>
            <person name="Liang Y."/>
            <person name="Rijnbrand R."/>
            <person name="Wei L."/>
            <person name="Nichols J.E."/>
            <person name="Guo J.T."/>
            <person name="Holbrook M.R."/>
            <person name="Lemon S.M."/>
            <person name="Li K."/>
        </authorList>
    </citation>
    <scope>FUNCTION IN HCV; HAV AND YFV RESTRICTION</scope>
    <scope>SUBCELLULAR LOCATION</scope>
</reference>
<reference key="13">
    <citation type="journal article" date="2004" name="FEBS Lett.">
        <title>Crystal structure of human ISG20, an interferon-induced antiviral ribonuclease.</title>
        <authorList>
            <person name="Horio T."/>
            <person name="Murai M."/>
            <person name="Inoue T."/>
            <person name="Hamasaki T."/>
            <person name="Tanaka T."/>
            <person name="Ohgi T."/>
        </authorList>
    </citation>
    <scope>X-RAY CRYSTALLOGRAPHY (1.9 ANGSTROMS) IN COMPLEX WITH UMP</scope>
    <scope>COFACTOR</scope>
    <scope>MANGANESE-BINDING SITES</scope>
</reference>
<reference key="14">
    <citation type="journal article" date="2019" name="PLoS Pathog.">
        <title>The interferon stimulated gene 20 protein (ISG20) is an innate defense antiviral factor that discriminates self versus non-self translation.</title>
        <authorList>
            <person name="Wu N."/>
            <person name="Nguyen X.N."/>
            <person name="Wang L."/>
            <person name="Appourchaux R."/>
            <person name="Zhang C."/>
            <person name="Panthu B."/>
            <person name="Gruffat H."/>
            <person name="Journo C."/>
            <person name="Alais S."/>
            <person name="Qin J."/>
            <person name="Zhang N."/>
            <person name="Tartour K."/>
            <person name="Catez F."/>
            <person name="Mahieux R."/>
            <person name="Ohlmann T."/>
            <person name="Liu M."/>
            <person name="Du B."/>
            <person name="Cimarelli A."/>
        </authorList>
    </citation>
    <scope>FUNCTION</scope>
    <scope>SUBCELLULAR LOCATION</scope>
</reference>
<feature type="chain" id="PRO_0000084243" description="Interferon-stimulated gene 20 kDa protein">
    <location>
        <begin position="1"/>
        <end position="181"/>
    </location>
</feature>
<feature type="binding site">
    <location>
        <position position="11"/>
    </location>
    <ligand>
        <name>Mn(2+)</name>
        <dbReference type="ChEBI" id="CHEBI:29035"/>
        <label>1</label>
    </ligand>
</feature>
<feature type="binding site">
    <location>
        <position position="13"/>
    </location>
    <ligand>
        <name>Mn(2+)</name>
        <dbReference type="ChEBI" id="CHEBI:29035"/>
        <label>1</label>
    </ligand>
</feature>
<feature type="binding site">
    <location>
        <position position="90"/>
    </location>
    <ligand>
        <name>Mn(2+)</name>
        <dbReference type="ChEBI" id="CHEBI:29035"/>
        <label>2</label>
    </ligand>
</feature>
<feature type="binding site">
    <location>
        <position position="93"/>
    </location>
    <ligand>
        <name>Mn(2+)</name>
        <dbReference type="ChEBI" id="CHEBI:29035"/>
        <label>2</label>
    </ligand>
</feature>
<feature type="binding site">
    <location>
        <position position="154"/>
    </location>
    <ligand>
        <name>Mn(2+)</name>
        <dbReference type="ChEBI" id="CHEBI:29035"/>
        <label>1</label>
    </ligand>
</feature>
<feature type="splice variant" id="VSP_012429" description="In isoform 2." evidence="11">
    <original>ILQLLKGKLV</original>
    <variation>VPFPSSPTAA</variation>
    <location>
        <begin position="77"/>
        <end position="86"/>
    </location>
</feature>
<feature type="splice variant" id="VSP_012430" description="In isoform 2." evidence="11">
    <location>
        <begin position="87"/>
        <end position="181"/>
    </location>
</feature>
<feature type="strand" evidence="13">
    <location>
        <begin position="7"/>
        <end position="17"/>
    </location>
</feature>
<feature type="turn" evidence="13">
    <location>
        <begin position="18"/>
        <end position="21"/>
    </location>
</feature>
<feature type="strand" evidence="13">
    <location>
        <begin position="22"/>
        <end position="31"/>
    </location>
</feature>
<feature type="strand" evidence="13">
    <location>
        <begin position="37"/>
        <end position="44"/>
    </location>
</feature>
<feature type="strand" evidence="13">
    <location>
        <begin position="49"/>
        <end position="51"/>
    </location>
</feature>
<feature type="helix" evidence="13">
    <location>
        <begin position="54"/>
        <end position="57"/>
    </location>
</feature>
<feature type="helix" evidence="13">
    <location>
        <begin position="61"/>
        <end position="64"/>
    </location>
</feature>
<feature type="helix" evidence="13">
    <location>
        <begin position="70"/>
        <end position="81"/>
    </location>
</feature>
<feature type="strand" evidence="13">
    <location>
        <begin position="84"/>
        <end position="90"/>
    </location>
</feature>
<feature type="helix" evidence="13">
    <location>
        <begin position="91"/>
        <end position="97"/>
    </location>
</feature>
<feature type="strand" evidence="13">
    <location>
        <begin position="106"/>
        <end position="109"/>
    </location>
</feature>
<feature type="helix" evidence="13">
    <location>
        <begin position="110"/>
        <end position="112"/>
    </location>
</feature>
<feature type="helix" evidence="13">
    <location>
        <begin position="114"/>
        <end position="120"/>
    </location>
</feature>
<feature type="helix" evidence="13">
    <location>
        <begin position="130"/>
        <end position="137"/>
    </location>
</feature>
<feature type="helix" evidence="13">
    <location>
        <begin position="151"/>
        <end position="171"/>
    </location>
</feature>
<evidence type="ECO:0000250" key="1">
    <source>
        <dbReference type="UniProtKB" id="Q9JL16"/>
    </source>
</evidence>
<evidence type="ECO:0000269" key="2">
    <source>
    </source>
</evidence>
<evidence type="ECO:0000269" key="3">
    <source>
    </source>
</evidence>
<evidence type="ECO:0000269" key="4">
    <source>
    </source>
</evidence>
<evidence type="ECO:0000269" key="5">
    <source>
    </source>
</evidence>
<evidence type="ECO:0000269" key="6">
    <source>
    </source>
</evidence>
<evidence type="ECO:0000269" key="7">
    <source>
    </source>
</evidence>
<evidence type="ECO:0000269" key="8">
    <source>
    </source>
</evidence>
<evidence type="ECO:0000269" key="9">
    <source>
    </source>
</evidence>
<evidence type="ECO:0000269" key="10">
    <source>
    </source>
</evidence>
<evidence type="ECO:0000303" key="11">
    <source>
    </source>
</evidence>
<evidence type="ECO:0000305" key="12"/>
<evidence type="ECO:0007829" key="13">
    <source>
        <dbReference type="PDB" id="1WLJ"/>
    </source>
</evidence>
<organism>
    <name type="scientific">Homo sapiens</name>
    <name type="common">Human</name>
    <dbReference type="NCBI Taxonomy" id="9606"/>
    <lineage>
        <taxon>Eukaryota</taxon>
        <taxon>Metazoa</taxon>
        <taxon>Chordata</taxon>
        <taxon>Craniata</taxon>
        <taxon>Vertebrata</taxon>
        <taxon>Euteleostomi</taxon>
        <taxon>Mammalia</taxon>
        <taxon>Eutheria</taxon>
        <taxon>Euarchontoglires</taxon>
        <taxon>Primates</taxon>
        <taxon>Haplorrhini</taxon>
        <taxon>Catarrhini</taxon>
        <taxon>Hominidae</taxon>
        <taxon>Homo</taxon>
    </lineage>
</organism>